<reference key="1">
    <citation type="journal article" date="2007" name="Genome Res.">
        <title>Reductive evolution and niche adaptation inferred from the genome of Mycobacterium ulcerans, the causative agent of Buruli ulcer.</title>
        <authorList>
            <person name="Stinear T.P."/>
            <person name="Seemann T."/>
            <person name="Pidot S."/>
            <person name="Frigui W."/>
            <person name="Reysset G."/>
            <person name="Garnier T."/>
            <person name="Meurice G."/>
            <person name="Simon D."/>
            <person name="Bouchier C."/>
            <person name="Ma L."/>
            <person name="Tichit M."/>
            <person name="Porter J.L."/>
            <person name="Ryan J."/>
            <person name="Johnson P.D.R."/>
            <person name="Davies J.K."/>
            <person name="Jenkin G.A."/>
            <person name="Small P.L.C."/>
            <person name="Jones L.M."/>
            <person name="Tekaia F."/>
            <person name="Laval F."/>
            <person name="Daffe M."/>
            <person name="Parkhill J."/>
            <person name="Cole S.T."/>
        </authorList>
    </citation>
    <scope>NUCLEOTIDE SEQUENCE [LARGE SCALE GENOMIC DNA]</scope>
    <source>
        <strain>Agy99</strain>
    </source>
</reference>
<evidence type="ECO:0000255" key="1">
    <source>
        <dbReference type="HAMAP-Rule" id="MF_00223"/>
    </source>
</evidence>
<keyword id="KW-0342">GTP-binding</keyword>
<keyword id="KW-0378">Hydrolase</keyword>
<keyword id="KW-0479">Metal-binding</keyword>
<keyword id="KW-0547">Nucleotide-binding</keyword>
<keyword id="KW-0554">One-carbon metabolism</keyword>
<keyword id="KW-0862">Zinc</keyword>
<name>GCH1_MYCUA</name>
<dbReference type="EC" id="3.5.4.16" evidence="1"/>
<dbReference type="EMBL" id="CP000325">
    <property type="protein sequence ID" value="ABL06226.1"/>
    <property type="molecule type" value="Genomic_DNA"/>
</dbReference>
<dbReference type="RefSeq" id="WP_011741829.1">
    <property type="nucleotide sequence ID" value="NC_008611.1"/>
</dbReference>
<dbReference type="SMR" id="A0PV57"/>
<dbReference type="KEGG" id="mul:MUL_4191"/>
<dbReference type="eggNOG" id="COG0302">
    <property type="taxonomic scope" value="Bacteria"/>
</dbReference>
<dbReference type="HOGENOM" id="CLU_049768_3_3_11"/>
<dbReference type="UniPathway" id="UPA00848">
    <property type="reaction ID" value="UER00151"/>
</dbReference>
<dbReference type="Proteomes" id="UP000000765">
    <property type="component" value="Chromosome"/>
</dbReference>
<dbReference type="GO" id="GO:0005737">
    <property type="term" value="C:cytoplasm"/>
    <property type="evidence" value="ECO:0007669"/>
    <property type="project" value="TreeGrafter"/>
</dbReference>
<dbReference type="GO" id="GO:0005525">
    <property type="term" value="F:GTP binding"/>
    <property type="evidence" value="ECO:0007669"/>
    <property type="project" value="UniProtKB-KW"/>
</dbReference>
<dbReference type="GO" id="GO:0003934">
    <property type="term" value="F:GTP cyclohydrolase I activity"/>
    <property type="evidence" value="ECO:0007669"/>
    <property type="project" value="UniProtKB-UniRule"/>
</dbReference>
<dbReference type="GO" id="GO:0008270">
    <property type="term" value="F:zinc ion binding"/>
    <property type="evidence" value="ECO:0007669"/>
    <property type="project" value="UniProtKB-UniRule"/>
</dbReference>
<dbReference type="GO" id="GO:0006730">
    <property type="term" value="P:one-carbon metabolic process"/>
    <property type="evidence" value="ECO:0007669"/>
    <property type="project" value="UniProtKB-UniRule"/>
</dbReference>
<dbReference type="GO" id="GO:0006729">
    <property type="term" value="P:tetrahydrobiopterin biosynthetic process"/>
    <property type="evidence" value="ECO:0007669"/>
    <property type="project" value="TreeGrafter"/>
</dbReference>
<dbReference type="GO" id="GO:0046654">
    <property type="term" value="P:tetrahydrofolate biosynthetic process"/>
    <property type="evidence" value="ECO:0007669"/>
    <property type="project" value="UniProtKB-UniRule"/>
</dbReference>
<dbReference type="FunFam" id="1.10.286.10:FF:000001">
    <property type="entry name" value="GTP cyclohydrolase 1"/>
    <property type="match status" value="1"/>
</dbReference>
<dbReference type="FunFam" id="3.30.1130.10:FF:000001">
    <property type="entry name" value="GTP cyclohydrolase 1"/>
    <property type="match status" value="1"/>
</dbReference>
<dbReference type="Gene3D" id="1.10.286.10">
    <property type="match status" value="1"/>
</dbReference>
<dbReference type="Gene3D" id="3.30.1130.10">
    <property type="match status" value="1"/>
</dbReference>
<dbReference type="HAMAP" id="MF_00223">
    <property type="entry name" value="FolE"/>
    <property type="match status" value="1"/>
</dbReference>
<dbReference type="InterPro" id="IPR043133">
    <property type="entry name" value="GTP-CH-I_C/QueF"/>
</dbReference>
<dbReference type="InterPro" id="IPR043134">
    <property type="entry name" value="GTP-CH-I_N"/>
</dbReference>
<dbReference type="InterPro" id="IPR001474">
    <property type="entry name" value="GTP_CycHdrlase_I"/>
</dbReference>
<dbReference type="InterPro" id="IPR018234">
    <property type="entry name" value="GTP_CycHdrlase_I_CS"/>
</dbReference>
<dbReference type="InterPro" id="IPR020602">
    <property type="entry name" value="GTP_CycHdrlase_I_dom"/>
</dbReference>
<dbReference type="NCBIfam" id="TIGR00063">
    <property type="entry name" value="folE"/>
    <property type="match status" value="1"/>
</dbReference>
<dbReference type="NCBIfam" id="NF006825">
    <property type="entry name" value="PRK09347.1-2"/>
    <property type="match status" value="1"/>
</dbReference>
<dbReference type="NCBIfam" id="NF006826">
    <property type="entry name" value="PRK09347.1-3"/>
    <property type="match status" value="1"/>
</dbReference>
<dbReference type="PANTHER" id="PTHR11109:SF7">
    <property type="entry name" value="GTP CYCLOHYDROLASE 1"/>
    <property type="match status" value="1"/>
</dbReference>
<dbReference type="PANTHER" id="PTHR11109">
    <property type="entry name" value="GTP CYCLOHYDROLASE I"/>
    <property type="match status" value="1"/>
</dbReference>
<dbReference type="Pfam" id="PF01227">
    <property type="entry name" value="GTP_cyclohydroI"/>
    <property type="match status" value="1"/>
</dbReference>
<dbReference type="SUPFAM" id="SSF55620">
    <property type="entry name" value="Tetrahydrobiopterin biosynthesis enzymes-like"/>
    <property type="match status" value="1"/>
</dbReference>
<dbReference type="PROSITE" id="PS00859">
    <property type="entry name" value="GTP_CYCLOHYDROL_1_1"/>
    <property type="match status" value="1"/>
</dbReference>
<dbReference type="PROSITE" id="PS00860">
    <property type="entry name" value="GTP_CYCLOHYDROL_1_2"/>
    <property type="match status" value="1"/>
</dbReference>
<proteinExistence type="inferred from homology"/>
<comment type="catalytic activity">
    <reaction evidence="1">
        <text>GTP + H2O = 7,8-dihydroneopterin 3'-triphosphate + formate + H(+)</text>
        <dbReference type="Rhea" id="RHEA:17473"/>
        <dbReference type="ChEBI" id="CHEBI:15377"/>
        <dbReference type="ChEBI" id="CHEBI:15378"/>
        <dbReference type="ChEBI" id="CHEBI:15740"/>
        <dbReference type="ChEBI" id="CHEBI:37565"/>
        <dbReference type="ChEBI" id="CHEBI:58462"/>
        <dbReference type="EC" id="3.5.4.16"/>
    </reaction>
</comment>
<comment type="pathway">
    <text evidence="1">Cofactor biosynthesis; 7,8-dihydroneopterin triphosphate biosynthesis; 7,8-dihydroneopterin triphosphate from GTP: step 1/1.</text>
</comment>
<comment type="subunit">
    <text evidence="1">Homomer.</text>
</comment>
<comment type="similarity">
    <text evidence="1">Belongs to the GTP cyclohydrolase I family.</text>
</comment>
<feature type="chain" id="PRO_1000100186" description="GTP cyclohydrolase 1">
    <location>
        <begin position="1"/>
        <end position="202"/>
    </location>
</feature>
<feature type="binding site" evidence="1">
    <location>
        <position position="90"/>
    </location>
    <ligand>
        <name>Zn(2+)</name>
        <dbReference type="ChEBI" id="CHEBI:29105"/>
    </ligand>
</feature>
<feature type="binding site" evidence="1">
    <location>
        <position position="93"/>
    </location>
    <ligand>
        <name>Zn(2+)</name>
        <dbReference type="ChEBI" id="CHEBI:29105"/>
    </ligand>
</feature>
<feature type="binding site" evidence="1">
    <location>
        <position position="163"/>
    </location>
    <ligand>
        <name>Zn(2+)</name>
        <dbReference type="ChEBI" id="CHEBI:29105"/>
    </ligand>
</feature>
<organism>
    <name type="scientific">Mycobacterium ulcerans (strain Agy99)</name>
    <dbReference type="NCBI Taxonomy" id="362242"/>
    <lineage>
        <taxon>Bacteria</taxon>
        <taxon>Bacillati</taxon>
        <taxon>Actinomycetota</taxon>
        <taxon>Actinomycetes</taxon>
        <taxon>Mycobacteriales</taxon>
        <taxon>Mycobacteriaceae</taxon>
        <taxon>Mycobacterium</taxon>
        <taxon>Mycobacterium ulcerans group</taxon>
    </lineage>
</organism>
<sequence>MTQLDSRTEATTTRAFDQPRAEAAVRELLLAIGEDPDRGGLRDTPARVARAYREIFAGLYTDPDAVLNTMFDEDHDELVLIKEIPLYSTCEHHLVSFHGVAHVGYIPGRDGRVTGLSKIARLVDLYAKRPQVQERLTSQIADALVKRLGPRGVLVVVEAEHLCMAMRGVRKPGAVTTTSAVRGQFKTDAASRAEALDLILRK</sequence>
<accession>A0PV57</accession>
<gene>
    <name evidence="1" type="primary">folE</name>
    <name type="ordered locus">MUL_4191</name>
</gene>
<protein>
    <recommendedName>
        <fullName evidence="1">GTP cyclohydrolase 1</fullName>
        <ecNumber evidence="1">3.5.4.16</ecNumber>
    </recommendedName>
    <alternativeName>
        <fullName evidence="1">GTP cyclohydrolase I</fullName>
        <shortName evidence="1">GTP-CH-I</shortName>
    </alternativeName>
</protein>